<comment type="function">
    <text evidence="1">Antibacterial protein. Putative acid-stable proteinase inhibitor (By similarity).</text>
</comment>
<comment type="subcellular location">
    <subcellularLocation>
        <location evidence="5">Secreted</location>
    </subcellularLocation>
</comment>
<accession>A4K2Y4</accession>
<gene>
    <name type="primary">WFDC12</name>
</gene>
<reference key="1">
    <citation type="journal article" date="2007" name="Genome Res.">
        <title>Comparative sequence analyses reveal rapid and divergent evolutionary changes of the WFDC locus in the primate lineage.</title>
        <authorList>
            <consortium name="NISC comparative sequencing program"/>
            <person name="Hurle B."/>
            <person name="Swanson W."/>
            <person name="Green E.D."/>
        </authorList>
    </citation>
    <scope>NUCLEOTIDE SEQUENCE [GENOMIC DNA]</scope>
</reference>
<keyword id="KW-0044">Antibiotic</keyword>
<keyword id="KW-0929">Antimicrobial</keyword>
<keyword id="KW-1015">Disulfide bond</keyword>
<keyword id="KW-0646">Protease inhibitor</keyword>
<keyword id="KW-0964">Secreted</keyword>
<keyword id="KW-0722">Serine protease inhibitor</keyword>
<keyword id="KW-0732">Signal</keyword>
<sequence>MGSSSFLVLMVSLTLVTLVAAEGVKGGIEKAGVCPADNVRCFKSDPPQCHTDQDCLGERKCCYLHCGFKCVIPVKKLEEGGNKDEDVSGPCPEPGWEAKSPGSSSTGCPQK</sequence>
<dbReference type="EMBL" id="DP000048">
    <property type="protein sequence ID" value="ABO53019.1"/>
    <property type="molecule type" value="Genomic_DNA"/>
</dbReference>
<dbReference type="SMR" id="A4K2Y4"/>
<dbReference type="MEROPS" id="I17.003"/>
<dbReference type="GO" id="GO:0005576">
    <property type="term" value="C:extracellular region"/>
    <property type="evidence" value="ECO:0007669"/>
    <property type="project" value="UniProtKB-SubCell"/>
</dbReference>
<dbReference type="GO" id="GO:0004867">
    <property type="term" value="F:serine-type endopeptidase inhibitor activity"/>
    <property type="evidence" value="ECO:0007669"/>
    <property type="project" value="UniProtKB-KW"/>
</dbReference>
<dbReference type="GO" id="GO:0042742">
    <property type="term" value="P:defense response to bacterium"/>
    <property type="evidence" value="ECO:0007669"/>
    <property type="project" value="UniProtKB-KW"/>
</dbReference>
<dbReference type="FunFam" id="4.10.75.10:FF:000005">
    <property type="entry name" value="WAP four-disulfide core domain protein 12"/>
    <property type="match status" value="1"/>
</dbReference>
<dbReference type="Gene3D" id="4.10.75.10">
    <property type="entry name" value="Elafin-like"/>
    <property type="match status" value="1"/>
</dbReference>
<dbReference type="InterPro" id="IPR036645">
    <property type="entry name" value="Elafin-like_sf"/>
</dbReference>
<dbReference type="InterPro" id="IPR008197">
    <property type="entry name" value="WAP_dom"/>
</dbReference>
<dbReference type="Pfam" id="PF00095">
    <property type="entry name" value="WAP"/>
    <property type="match status" value="1"/>
</dbReference>
<dbReference type="PRINTS" id="PR00003">
    <property type="entry name" value="4DISULPHCORE"/>
</dbReference>
<dbReference type="SMART" id="SM00217">
    <property type="entry name" value="WAP"/>
    <property type="match status" value="1"/>
</dbReference>
<dbReference type="SUPFAM" id="SSF57256">
    <property type="entry name" value="Elafin-like"/>
    <property type="match status" value="1"/>
</dbReference>
<dbReference type="PROSITE" id="PS51390">
    <property type="entry name" value="WAP"/>
    <property type="match status" value="1"/>
</dbReference>
<evidence type="ECO:0000250" key="1"/>
<evidence type="ECO:0000255" key="2"/>
<evidence type="ECO:0000255" key="3">
    <source>
        <dbReference type="PROSITE-ProRule" id="PRU00722"/>
    </source>
</evidence>
<evidence type="ECO:0000256" key="4">
    <source>
        <dbReference type="SAM" id="MobiDB-lite"/>
    </source>
</evidence>
<evidence type="ECO:0000305" key="5"/>
<name>WFD12_CHLAE</name>
<protein>
    <recommendedName>
        <fullName>WAP four-disulfide core domain protein 12</fullName>
    </recommendedName>
</protein>
<proteinExistence type="inferred from homology"/>
<feature type="signal peptide" evidence="2">
    <location>
        <begin position="1"/>
        <end position="23"/>
    </location>
</feature>
<feature type="chain" id="PRO_0000289647" description="WAP four-disulfide core domain protein 12">
    <location>
        <begin position="24"/>
        <end position="111"/>
    </location>
</feature>
<feature type="domain" description="WAP" evidence="3">
    <location>
        <begin position="27"/>
        <end position="74"/>
    </location>
</feature>
<feature type="region of interest" description="Disordered" evidence="4">
    <location>
        <begin position="80"/>
        <end position="111"/>
    </location>
</feature>
<feature type="compositionally biased region" description="Polar residues" evidence="4">
    <location>
        <begin position="101"/>
        <end position="111"/>
    </location>
</feature>
<feature type="disulfide bond" evidence="3">
    <location>
        <begin position="34"/>
        <end position="62"/>
    </location>
</feature>
<feature type="disulfide bond" evidence="3">
    <location>
        <begin position="41"/>
        <end position="66"/>
    </location>
</feature>
<feature type="disulfide bond" evidence="3">
    <location>
        <begin position="49"/>
        <end position="61"/>
    </location>
</feature>
<feature type="disulfide bond" evidence="3">
    <location>
        <begin position="55"/>
        <end position="70"/>
    </location>
</feature>
<organism>
    <name type="scientific">Chlorocebus aethiops</name>
    <name type="common">Green monkey</name>
    <name type="synonym">Cercopithecus aethiops</name>
    <dbReference type="NCBI Taxonomy" id="9534"/>
    <lineage>
        <taxon>Eukaryota</taxon>
        <taxon>Metazoa</taxon>
        <taxon>Chordata</taxon>
        <taxon>Craniata</taxon>
        <taxon>Vertebrata</taxon>
        <taxon>Euteleostomi</taxon>
        <taxon>Mammalia</taxon>
        <taxon>Eutheria</taxon>
        <taxon>Euarchontoglires</taxon>
        <taxon>Primates</taxon>
        <taxon>Haplorrhini</taxon>
        <taxon>Catarrhini</taxon>
        <taxon>Cercopithecidae</taxon>
        <taxon>Cercopithecinae</taxon>
        <taxon>Chlorocebus</taxon>
    </lineage>
</organism>